<dbReference type="EC" id="5.3.1.24" evidence="1"/>
<dbReference type="EMBL" id="CP000232">
    <property type="protein sequence ID" value="ABC19651.1"/>
    <property type="molecule type" value="Genomic_DNA"/>
</dbReference>
<dbReference type="RefSeq" id="YP_430194.1">
    <property type="nucleotide sequence ID" value="NC_007644.1"/>
</dbReference>
<dbReference type="SMR" id="Q2RIT8"/>
<dbReference type="STRING" id="264732.Moth_1338"/>
<dbReference type="EnsemblBacteria" id="ABC19651">
    <property type="protein sequence ID" value="ABC19651"/>
    <property type="gene ID" value="Moth_1338"/>
</dbReference>
<dbReference type="KEGG" id="mta:Moth_1338"/>
<dbReference type="PATRIC" id="fig|264732.11.peg.1436"/>
<dbReference type="eggNOG" id="COG0135">
    <property type="taxonomic scope" value="Bacteria"/>
</dbReference>
<dbReference type="HOGENOM" id="CLU_076364_2_0_9"/>
<dbReference type="OrthoDB" id="9786954at2"/>
<dbReference type="UniPathway" id="UPA00035">
    <property type="reaction ID" value="UER00042"/>
</dbReference>
<dbReference type="GO" id="GO:0004640">
    <property type="term" value="F:phosphoribosylanthranilate isomerase activity"/>
    <property type="evidence" value="ECO:0007669"/>
    <property type="project" value="UniProtKB-UniRule"/>
</dbReference>
<dbReference type="GO" id="GO:0000162">
    <property type="term" value="P:L-tryptophan biosynthetic process"/>
    <property type="evidence" value="ECO:0007669"/>
    <property type="project" value="UniProtKB-UniRule"/>
</dbReference>
<dbReference type="CDD" id="cd00405">
    <property type="entry name" value="PRAI"/>
    <property type="match status" value="1"/>
</dbReference>
<dbReference type="FunFam" id="3.20.20.70:FF:000075">
    <property type="entry name" value="Tryptophan biosynthesis protein TRP1"/>
    <property type="match status" value="1"/>
</dbReference>
<dbReference type="Gene3D" id="3.20.20.70">
    <property type="entry name" value="Aldolase class I"/>
    <property type="match status" value="1"/>
</dbReference>
<dbReference type="HAMAP" id="MF_00135">
    <property type="entry name" value="PRAI"/>
    <property type="match status" value="1"/>
</dbReference>
<dbReference type="InterPro" id="IPR013785">
    <property type="entry name" value="Aldolase_TIM"/>
</dbReference>
<dbReference type="InterPro" id="IPR001240">
    <property type="entry name" value="PRAI_dom"/>
</dbReference>
<dbReference type="InterPro" id="IPR011060">
    <property type="entry name" value="RibuloseP-bd_barrel"/>
</dbReference>
<dbReference type="InterPro" id="IPR044643">
    <property type="entry name" value="TrpF_fam"/>
</dbReference>
<dbReference type="NCBIfam" id="NF002298">
    <property type="entry name" value="PRK01222.1-4"/>
    <property type="match status" value="1"/>
</dbReference>
<dbReference type="PANTHER" id="PTHR42894">
    <property type="entry name" value="N-(5'-PHOSPHORIBOSYL)ANTHRANILATE ISOMERASE"/>
    <property type="match status" value="1"/>
</dbReference>
<dbReference type="PANTHER" id="PTHR42894:SF1">
    <property type="entry name" value="N-(5'-PHOSPHORIBOSYL)ANTHRANILATE ISOMERASE"/>
    <property type="match status" value="1"/>
</dbReference>
<dbReference type="Pfam" id="PF00697">
    <property type="entry name" value="PRAI"/>
    <property type="match status" value="1"/>
</dbReference>
<dbReference type="SUPFAM" id="SSF51366">
    <property type="entry name" value="Ribulose-phoshate binding barrel"/>
    <property type="match status" value="1"/>
</dbReference>
<protein>
    <recommendedName>
        <fullName evidence="1">N-(5'-phosphoribosyl)anthranilate isomerase</fullName>
        <shortName evidence="1">PRAI</shortName>
        <ecNumber evidence="1">5.3.1.24</ecNumber>
    </recommendedName>
</protein>
<evidence type="ECO:0000255" key="1">
    <source>
        <dbReference type="HAMAP-Rule" id="MF_00135"/>
    </source>
</evidence>
<accession>Q2RIT8</accession>
<gene>
    <name evidence="1" type="primary">trpF</name>
    <name type="ordered locus">Moth_1338</name>
</gene>
<keyword id="KW-0028">Amino-acid biosynthesis</keyword>
<keyword id="KW-0057">Aromatic amino acid biosynthesis</keyword>
<keyword id="KW-0413">Isomerase</keyword>
<keyword id="KW-0822">Tryptophan biosynthesis</keyword>
<comment type="catalytic activity">
    <reaction evidence="1">
        <text>N-(5-phospho-beta-D-ribosyl)anthranilate = 1-(2-carboxyphenylamino)-1-deoxy-D-ribulose 5-phosphate</text>
        <dbReference type="Rhea" id="RHEA:21540"/>
        <dbReference type="ChEBI" id="CHEBI:18277"/>
        <dbReference type="ChEBI" id="CHEBI:58613"/>
        <dbReference type="EC" id="5.3.1.24"/>
    </reaction>
</comment>
<comment type="pathway">
    <text evidence="1">Amino-acid biosynthesis; L-tryptophan biosynthesis; L-tryptophan from chorismate: step 3/5.</text>
</comment>
<comment type="similarity">
    <text evidence="1">Belongs to the TrpF family.</text>
</comment>
<sequence>MVRVKICGIRDWEEARMVLDAGVDTLGFVFARSPRAIKPEAAREIITKLPPFTTTVGVFVNEPRYSLMEIASFCRLDVLQLHGDEPPEYCHGLSQRLIKAIRVRDAASLASLEAYREVQGFLLDAWVPGKAGGTGTTFNWELVRGAATGGKPVILAGGLTPENVGAAIQLVHPYAVDVSSGVEVDGRKNPARIAAFLEAVRKAEEHHVRPTASSCCTGLKGDF</sequence>
<organism>
    <name type="scientific">Moorella thermoacetica (strain ATCC 39073 / JCM 9320)</name>
    <dbReference type="NCBI Taxonomy" id="264732"/>
    <lineage>
        <taxon>Bacteria</taxon>
        <taxon>Bacillati</taxon>
        <taxon>Bacillota</taxon>
        <taxon>Clostridia</taxon>
        <taxon>Moorellales</taxon>
        <taxon>Moorellaceae</taxon>
        <taxon>Moorella</taxon>
    </lineage>
</organism>
<name>TRPF_MOOTA</name>
<feature type="chain" id="PRO_1000018610" description="N-(5'-phosphoribosyl)anthranilate isomerase">
    <location>
        <begin position="1"/>
        <end position="223"/>
    </location>
</feature>
<proteinExistence type="inferred from homology"/>
<reference key="1">
    <citation type="journal article" date="2008" name="Environ. Microbiol.">
        <title>The complete genome sequence of Moorella thermoacetica (f. Clostridium thermoaceticum).</title>
        <authorList>
            <person name="Pierce E."/>
            <person name="Xie G."/>
            <person name="Barabote R.D."/>
            <person name="Saunders E."/>
            <person name="Han C.S."/>
            <person name="Detter J.C."/>
            <person name="Richardson P."/>
            <person name="Brettin T.S."/>
            <person name="Das A."/>
            <person name="Ljungdahl L.G."/>
            <person name="Ragsdale S.W."/>
        </authorList>
    </citation>
    <scope>NUCLEOTIDE SEQUENCE [LARGE SCALE GENOMIC DNA]</scope>
    <source>
        <strain>ATCC 39073 / JCM 9320</strain>
    </source>
</reference>